<sequence length="227" mass="26530">MFKRMAEFGPDSGGRVKGVTIVKPIVYGNVARYFGKKREEDGHTHQWTVYVKPYRNEDMSAYVKKIQFKLHESYGNPLRVVTKPPYEITETGWGEFEIIIKIFFIDPNERPVTLYHLLKLFQSDTNAMLGKKTVVSEFYDEMIFQDPTAMMQQLLTTSRQLTLGAYKHETEFAELEVKTREKLEAAKKKTSFEIAELKERLKASRETINCLKNEIRKLEEDDQTKDI</sequence>
<evidence type="ECO:0000250" key="1"/>
<evidence type="ECO:0000250" key="2">
    <source>
        <dbReference type="UniProtKB" id="O95619"/>
    </source>
</evidence>
<evidence type="ECO:0000255" key="3"/>
<evidence type="ECO:0000255" key="4">
    <source>
        <dbReference type="PROSITE-ProRule" id="PRU00376"/>
    </source>
</evidence>
<evidence type="ECO:0000269" key="5">
    <source>
    </source>
</evidence>
<evidence type="ECO:0000303" key="6">
    <source>
    </source>
</evidence>
<evidence type="ECO:0000305" key="7"/>
<evidence type="ECO:0000312" key="8">
    <source>
        <dbReference type="MGI" id="MGI:1927224"/>
    </source>
</evidence>
<comment type="function">
    <text evidence="2 5">Chromatin reader component of the NuA4 histone acetyltransferase (HAT) complex, a complex involved in transcriptional activation of select genes principally by acetylation of nucleosomal histones H4 and H2A (By similarity). Specifically recognizes and binds acylated histone H3, with a preference for histone H3 diacetylated at 'Lys-18' and 'Lys-27' (H3K18ac and H3K27ac) or histone H3 diacetylated at 'Lys-14' and 'Lys-27' (H3K14ac and H3K27ac) (By similarity). Also able to recognize and bind crotonylated histone H3 (By similarity). May also recognize and bind histone H3 succinylated at 'Lys-122' (H3K122succ); additional evidences are however required to confirm this result in vivo (By similarity). Plays a key role in histone variant H2AZ1/H2A.Z deposition into specific chromatin regions: recognizes and binds H3K14ac and H3K27ac on the promoters of actively transcribed genes and recruits NuA4-related complex to deposit H2AZ1/H2A.Z (By similarity). H2AZ1/H2A.Z deposition is required for maintenance of embryonic stem cell (PubMed:29900004).</text>
</comment>
<comment type="subunit">
    <text evidence="2">Component of numerous complexes with chromatin remodeling and histone acetyltransferase activity. Component of the NuA4 histone acetyltransferase complex which contains the catalytic subunit KAT5/TIP60 and the subunits EP400, TRRAP/PAF400, BRD8/SMAP, EPC1, DMAP1/DNMAP1, RUVBL1/TIP49, RUVBL2, ING3, actin, ACTL6A/BAF53A, MORF4L1/MRG15, MORF4L2/MRGX, MRGBP, YEATS4/GAS41, VPS72/YL1 and MEAF6. The NuA4 complex interacts with MYC and the adenovirus E1A protein. Component of a NuA4-related complex which contains EP400, TRRAP/PAF400, SRCAP, BRD8/SMAP, EPC1, DMAP1/DNMAP1, RUVBL1/TIP49, RUVBL2, actin, ACTL6A/BAF53A, VPS72 and YEATS4/GAS41. Interacts with MLLT10/AF10. Also interacts with the SWI/SNF component SMARCB1/BAF47, TACC1 and TACC2, and the nuclear matrix protein NUMA1.</text>
</comment>
<comment type="subcellular location">
    <subcellularLocation>
        <location evidence="4">Nucleus</location>
    </subcellularLocation>
</comment>
<comment type="domain">
    <text evidence="2">The YEATS domain specifically recognizes and binds acylated histones, with a preference for histone H3 diacetylated at 'Lys-14' and 'Lys-27' (H3K14ac and H3K27ac).</text>
</comment>
<dbReference type="EMBL" id="AK002839">
    <property type="protein sequence ID" value="BAB22396.1"/>
    <property type="molecule type" value="mRNA"/>
</dbReference>
<dbReference type="EMBL" id="AK012096">
    <property type="protein sequence ID" value="BAB28027.1"/>
    <property type="molecule type" value="mRNA"/>
</dbReference>
<dbReference type="EMBL" id="AK010522">
    <property type="protein sequence ID" value="BAB27003.1"/>
    <property type="molecule type" value="mRNA"/>
</dbReference>
<dbReference type="EMBL" id="BC020043">
    <property type="protein sequence ID" value="AAH20043.1"/>
    <property type="molecule type" value="mRNA"/>
</dbReference>
<dbReference type="CCDS" id="CCDS24191.1"/>
<dbReference type="RefSeq" id="NP_080846.1">
    <property type="nucleotide sequence ID" value="NM_026570.4"/>
</dbReference>
<dbReference type="SMR" id="Q9CR11"/>
<dbReference type="BioGRID" id="211018">
    <property type="interactions" value="4"/>
</dbReference>
<dbReference type="ComplexPortal" id="CPX-976">
    <property type="entry name" value="SRCAP chromatin remodeling complex"/>
</dbReference>
<dbReference type="ComplexPortal" id="CPX-990">
    <property type="entry name" value="NuA4 histone acetyltransferase complex"/>
</dbReference>
<dbReference type="FunCoup" id="Q9CR11">
    <property type="interactions" value="2778"/>
</dbReference>
<dbReference type="IntAct" id="Q9CR11">
    <property type="interactions" value="5"/>
</dbReference>
<dbReference type="MINT" id="Q9CR11"/>
<dbReference type="STRING" id="10090.ENSMUSP00000020382"/>
<dbReference type="GlyGen" id="Q9CR11">
    <property type="glycosylation" value="1 site, 1 O-linked glycan (1 site)"/>
</dbReference>
<dbReference type="iPTMnet" id="Q9CR11"/>
<dbReference type="PhosphoSitePlus" id="Q9CR11"/>
<dbReference type="PaxDb" id="10090-ENSMUSP00000020382"/>
<dbReference type="PeptideAtlas" id="Q9CR11"/>
<dbReference type="ProteomicsDB" id="299620"/>
<dbReference type="Pumba" id="Q9CR11"/>
<dbReference type="Antibodypedia" id="16961">
    <property type="antibodies" value="392 antibodies from 32 providers"/>
</dbReference>
<dbReference type="DNASU" id="64050"/>
<dbReference type="Ensembl" id="ENSMUST00000020382.8">
    <property type="protein sequence ID" value="ENSMUSP00000020382.7"/>
    <property type="gene ID" value="ENSMUSG00000020171.9"/>
</dbReference>
<dbReference type="GeneID" id="64050"/>
<dbReference type="KEGG" id="mmu:64050"/>
<dbReference type="UCSC" id="uc007hcx.2">
    <property type="organism name" value="mouse"/>
</dbReference>
<dbReference type="AGR" id="MGI:1927224"/>
<dbReference type="CTD" id="8089"/>
<dbReference type="MGI" id="MGI:1927224">
    <property type="gene designation" value="Yeats4"/>
</dbReference>
<dbReference type="VEuPathDB" id="HostDB:ENSMUSG00000020171"/>
<dbReference type="eggNOG" id="KOG3149">
    <property type="taxonomic scope" value="Eukaryota"/>
</dbReference>
<dbReference type="GeneTree" id="ENSGT00940000155811"/>
<dbReference type="HOGENOM" id="CLU_051385_3_0_1"/>
<dbReference type="InParanoid" id="Q9CR11"/>
<dbReference type="OMA" id="VKPYHNE"/>
<dbReference type="OrthoDB" id="16041at2759"/>
<dbReference type="PhylomeDB" id="Q9CR11"/>
<dbReference type="Reactome" id="R-MMU-8866907">
    <property type="pathway name" value="Activation of the TFAP2 (AP-2) family of transcription factors"/>
</dbReference>
<dbReference type="BioGRID-ORCS" id="64050">
    <property type="hits" value="27 hits in 79 CRISPR screens"/>
</dbReference>
<dbReference type="PRO" id="PR:Q9CR11"/>
<dbReference type="Proteomes" id="UP000000589">
    <property type="component" value="Chromosome 10"/>
</dbReference>
<dbReference type="RNAct" id="Q9CR11">
    <property type="molecule type" value="protein"/>
</dbReference>
<dbReference type="Bgee" id="ENSMUSG00000020171">
    <property type="expression patterns" value="Expressed in dorsal pancreas and 262 other cell types or tissues"/>
</dbReference>
<dbReference type="ExpressionAtlas" id="Q9CR11">
    <property type="expression patterns" value="baseline and differential"/>
</dbReference>
<dbReference type="GO" id="GO:0035267">
    <property type="term" value="C:NuA4 histone acetyltransferase complex"/>
    <property type="evidence" value="ECO:0000250"/>
    <property type="project" value="UniProtKB"/>
</dbReference>
<dbReference type="GO" id="GO:0031965">
    <property type="term" value="C:nuclear membrane"/>
    <property type="evidence" value="ECO:0007669"/>
    <property type="project" value="Ensembl"/>
</dbReference>
<dbReference type="GO" id="GO:0005654">
    <property type="term" value="C:nucleoplasm"/>
    <property type="evidence" value="ECO:0000314"/>
    <property type="project" value="MGI"/>
</dbReference>
<dbReference type="GO" id="GO:0000786">
    <property type="term" value="C:nucleosome"/>
    <property type="evidence" value="ECO:0000266"/>
    <property type="project" value="ComplexPortal"/>
</dbReference>
<dbReference type="GO" id="GO:0140044">
    <property type="term" value="F:histone H3K18ac reader activity"/>
    <property type="evidence" value="ECO:0000250"/>
    <property type="project" value="UniProtKB"/>
</dbReference>
<dbReference type="GO" id="GO:0140119">
    <property type="term" value="F:histone H3K27ac reader activity"/>
    <property type="evidence" value="ECO:0000250"/>
    <property type="project" value="UniProtKB"/>
</dbReference>
<dbReference type="GO" id="GO:0070577">
    <property type="term" value="F:lysine-acetylated histone binding"/>
    <property type="evidence" value="ECO:0007669"/>
    <property type="project" value="Ensembl"/>
</dbReference>
<dbReference type="GO" id="GO:0045893">
    <property type="term" value="P:positive regulation of DNA-templated transcription"/>
    <property type="evidence" value="ECO:0000303"/>
    <property type="project" value="ComplexPortal"/>
</dbReference>
<dbReference type="GO" id="GO:1905168">
    <property type="term" value="P:positive regulation of double-strand break repair via homologous recombination"/>
    <property type="evidence" value="ECO:0000266"/>
    <property type="project" value="ComplexPortal"/>
</dbReference>
<dbReference type="GO" id="GO:0042981">
    <property type="term" value="P:regulation of apoptotic process"/>
    <property type="evidence" value="ECO:0000303"/>
    <property type="project" value="ComplexPortal"/>
</dbReference>
<dbReference type="GO" id="GO:0051726">
    <property type="term" value="P:regulation of cell cycle"/>
    <property type="evidence" value="ECO:0000266"/>
    <property type="project" value="ComplexPortal"/>
</dbReference>
<dbReference type="GO" id="GO:0006355">
    <property type="term" value="P:regulation of DNA-templated transcription"/>
    <property type="evidence" value="ECO:0000303"/>
    <property type="project" value="ComplexPortal"/>
</dbReference>
<dbReference type="GO" id="GO:2000779">
    <property type="term" value="P:regulation of double-strand break repair"/>
    <property type="evidence" value="ECO:0000303"/>
    <property type="project" value="ComplexPortal"/>
</dbReference>
<dbReference type="CDD" id="cd16909">
    <property type="entry name" value="YEATS_GAS41_like"/>
    <property type="match status" value="1"/>
</dbReference>
<dbReference type="FunFam" id="2.60.40.1970:FF:000002">
    <property type="entry name" value="YEATS domain-containing protein 4"/>
    <property type="match status" value="1"/>
</dbReference>
<dbReference type="Gene3D" id="2.60.40.1970">
    <property type="entry name" value="YEATS domain"/>
    <property type="match status" value="1"/>
</dbReference>
<dbReference type="InterPro" id="IPR038704">
    <property type="entry name" value="YEAST_sf"/>
</dbReference>
<dbReference type="InterPro" id="IPR005033">
    <property type="entry name" value="YEATS"/>
</dbReference>
<dbReference type="InterPro" id="IPR055129">
    <property type="entry name" value="YEATS_dom"/>
</dbReference>
<dbReference type="PANTHER" id="PTHR47573">
    <property type="entry name" value="PROTEIN AF-9 HOMOLOG"/>
    <property type="match status" value="1"/>
</dbReference>
<dbReference type="PANTHER" id="PTHR47573:SF1">
    <property type="entry name" value="PROTEIN AF-9 HOMOLOG"/>
    <property type="match status" value="1"/>
</dbReference>
<dbReference type="Pfam" id="PF03366">
    <property type="entry name" value="YEATS"/>
    <property type="match status" value="1"/>
</dbReference>
<dbReference type="PROSITE" id="PS51037">
    <property type="entry name" value="YEATS"/>
    <property type="match status" value="1"/>
</dbReference>
<keyword id="KW-0156">Chromatin regulator</keyword>
<keyword id="KW-0175">Coiled coil</keyword>
<keyword id="KW-0341">Growth regulation</keyword>
<keyword id="KW-1017">Isopeptide bond</keyword>
<keyword id="KW-0539">Nucleus</keyword>
<keyword id="KW-1185">Reference proteome</keyword>
<keyword id="KW-0804">Transcription</keyword>
<keyword id="KW-0805">Transcription regulation</keyword>
<keyword id="KW-0832">Ubl conjugation</keyword>
<protein>
    <recommendedName>
        <fullName evidence="7">YEATS domain-containing protein 4</fullName>
    </recommendedName>
    <alternativeName>
        <fullName evidence="6">Glioma-amplified sequence 41 homolog</fullName>
        <shortName evidence="6">Gas41</shortName>
    </alternativeName>
</protein>
<gene>
    <name evidence="8" type="primary">Yeats4</name>
    <name evidence="6" type="synonym">Gas41</name>
</gene>
<proteinExistence type="evidence at transcript level"/>
<feature type="chain" id="PRO_0000066205" description="YEATS domain-containing protein 4">
    <location>
        <begin position="1"/>
        <end position="227"/>
    </location>
</feature>
<feature type="domain" description="YEATS" evidence="4">
    <location>
        <begin position="15"/>
        <end position="158"/>
    </location>
</feature>
<feature type="region of interest" description="Diacetylated histone H3 binding" evidence="2">
    <location>
        <begin position="93"/>
        <end position="97"/>
    </location>
</feature>
<feature type="region of interest" description="Interaction with MLLT10" evidence="1">
    <location>
        <begin position="163"/>
        <end position="227"/>
    </location>
</feature>
<feature type="region of interest" description="Interaction with TACC1" evidence="1">
    <location>
        <begin position="168"/>
        <end position="227"/>
    </location>
</feature>
<feature type="coiled-coil region" evidence="3">
    <location>
        <begin position="178"/>
        <end position="226"/>
    </location>
</feature>
<feature type="site" description="Interacts with diacetylated histone H3" evidence="2">
    <location>
        <position position="73"/>
    </location>
</feature>
<feature type="cross-link" description="Glycyl lysine isopeptide (Lys-Gly) (interchain with G-Cter in SUMO2)" evidence="2">
    <location>
        <position position="37"/>
    </location>
</feature>
<name>YETS4_MOUSE</name>
<organism>
    <name type="scientific">Mus musculus</name>
    <name type="common">Mouse</name>
    <dbReference type="NCBI Taxonomy" id="10090"/>
    <lineage>
        <taxon>Eukaryota</taxon>
        <taxon>Metazoa</taxon>
        <taxon>Chordata</taxon>
        <taxon>Craniata</taxon>
        <taxon>Vertebrata</taxon>
        <taxon>Euteleostomi</taxon>
        <taxon>Mammalia</taxon>
        <taxon>Eutheria</taxon>
        <taxon>Euarchontoglires</taxon>
        <taxon>Glires</taxon>
        <taxon>Rodentia</taxon>
        <taxon>Myomorpha</taxon>
        <taxon>Muroidea</taxon>
        <taxon>Muridae</taxon>
        <taxon>Murinae</taxon>
        <taxon>Mus</taxon>
        <taxon>Mus</taxon>
    </lineage>
</organism>
<accession>Q9CR11</accession>
<accession>Q9CW86</accession>
<reference key="1">
    <citation type="journal article" date="2005" name="Science">
        <title>The transcriptional landscape of the mammalian genome.</title>
        <authorList>
            <person name="Carninci P."/>
            <person name="Kasukawa T."/>
            <person name="Katayama S."/>
            <person name="Gough J."/>
            <person name="Frith M.C."/>
            <person name="Maeda N."/>
            <person name="Oyama R."/>
            <person name="Ravasi T."/>
            <person name="Lenhard B."/>
            <person name="Wells C."/>
            <person name="Kodzius R."/>
            <person name="Shimokawa K."/>
            <person name="Bajic V.B."/>
            <person name="Brenner S.E."/>
            <person name="Batalov S."/>
            <person name="Forrest A.R."/>
            <person name="Zavolan M."/>
            <person name="Davis M.J."/>
            <person name="Wilming L.G."/>
            <person name="Aidinis V."/>
            <person name="Allen J.E."/>
            <person name="Ambesi-Impiombato A."/>
            <person name="Apweiler R."/>
            <person name="Aturaliya R.N."/>
            <person name="Bailey T.L."/>
            <person name="Bansal M."/>
            <person name="Baxter L."/>
            <person name="Beisel K.W."/>
            <person name="Bersano T."/>
            <person name="Bono H."/>
            <person name="Chalk A.M."/>
            <person name="Chiu K.P."/>
            <person name="Choudhary V."/>
            <person name="Christoffels A."/>
            <person name="Clutterbuck D.R."/>
            <person name="Crowe M.L."/>
            <person name="Dalla E."/>
            <person name="Dalrymple B.P."/>
            <person name="de Bono B."/>
            <person name="Della Gatta G."/>
            <person name="di Bernardo D."/>
            <person name="Down T."/>
            <person name="Engstrom P."/>
            <person name="Fagiolini M."/>
            <person name="Faulkner G."/>
            <person name="Fletcher C.F."/>
            <person name="Fukushima T."/>
            <person name="Furuno M."/>
            <person name="Futaki S."/>
            <person name="Gariboldi M."/>
            <person name="Georgii-Hemming P."/>
            <person name="Gingeras T.R."/>
            <person name="Gojobori T."/>
            <person name="Green R.E."/>
            <person name="Gustincich S."/>
            <person name="Harbers M."/>
            <person name="Hayashi Y."/>
            <person name="Hensch T.K."/>
            <person name="Hirokawa N."/>
            <person name="Hill D."/>
            <person name="Huminiecki L."/>
            <person name="Iacono M."/>
            <person name="Ikeo K."/>
            <person name="Iwama A."/>
            <person name="Ishikawa T."/>
            <person name="Jakt M."/>
            <person name="Kanapin A."/>
            <person name="Katoh M."/>
            <person name="Kawasawa Y."/>
            <person name="Kelso J."/>
            <person name="Kitamura H."/>
            <person name="Kitano H."/>
            <person name="Kollias G."/>
            <person name="Krishnan S.P."/>
            <person name="Kruger A."/>
            <person name="Kummerfeld S.K."/>
            <person name="Kurochkin I.V."/>
            <person name="Lareau L.F."/>
            <person name="Lazarevic D."/>
            <person name="Lipovich L."/>
            <person name="Liu J."/>
            <person name="Liuni S."/>
            <person name="McWilliam S."/>
            <person name="Madan Babu M."/>
            <person name="Madera M."/>
            <person name="Marchionni L."/>
            <person name="Matsuda H."/>
            <person name="Matsuzawa S."/>
            <person name="Miki H."/>
            <person name="Mignone F."/>
            <person name="Miyake S."/>
            <person name="Morris K."/>
            <person name="Mottagui-Tabar S."/>
            <person name="Mulder N."/>
            <person name="Nakano N."/>
            <person name="Nakauchi H."/>
            <person name="Ng P."/>
            <person name="Nilsson R."/>
            <person name="Nishiguchi S."/>
            <person name="Nishikawa S."/>
            <person name="Nori F."/>
            <person name="Ohara O."/>
            <person name="Okazaki Y."/>
            <person name="Orlando V."/>
            <person name="Pang K.C."/>
            <person name="Pavan W.J."/>
            <person name="Pavesi G."/>
            <person name="Pesole G."/>
            <person name="Petrovsky N."/>
            <person name="Piazza S."/>
            <person name="Reed J."/>
            <person name="Reid J.F."/>
            <person name="Ring B.Z."/>
            <person name="Ringwald M."/>
            <person name="Rost B."/>
            <person name="Ruan Y."/>
            <person name="Salzberg S.L."/>
            <person name="Sandelin A."/>
            <person name="Schneider C."/>
            <person name="Schoenbach C."/>
            <person name="Sekiguchi K."/>
            <person name="Semple C.A."/>
            <person name="Seno S."/>
            <person name="Sessa L."/>
            <person name="Sheng Y."/>
            <person name="Shibata Y."/>
            <person name="Shimada H."/>
            <person name="Shimada K."/>
            <person name="Silva D."/>
            <person name="Sinclair B."/>
            <person name="Sperling S."/>
            <person name="Stupka E."/>
            <person name="Sugiura K."/>
            <person name="Sultana R."/>
            <person name="Takenaka Y."/>
            <person name="Taki K."/>
            <person name="Tammoja K."/>
            <person name="Tan S.L."/>
            <person name="Tang S."/>
            <person name="Taylor M.S."/>
            <person name="Tegner J."/>
            <person name="Teichmann S.A."/>
            <person name="Ueda H.R."/>
            <person name="van Nimwegen E."/>
            <person name="Verardo R."/>
            <person name="Wei C.L."/>
            <person name="Yagi K."/>
            <person name="Yamanishi H."/>
            <person name="Zabarovsky E."/>
            <person name="Zhu S."/>
            <person name="Zimmer A."/>
            <person name="Hide W."/>
            <person name="Bult C."/>
            <person name="Grimmond S.M."/>
            <person name="Teasdale R.D."/>
            <person name="Liu E.T."/>
            <person name="Brusic V."/>
            <person name="Quackenbush J."/>
            <person name="Wahlestedt C."/>
            <person name="Mattick J.S."/>
            <person name="Hume D.A."/>
            <person name="Kai C."/>
            <person name="Sasaki D."/>
            <person name="Tomaru Y."/>
            <person name="Fukuda S."/>
            <person name="Kanamori-Katayama M."/>
            <person name="Suzuki M."/>
            <person name="Aoki J."/>
            <person name="Arakawa T."/>
            <person name="Iida J."/>
            <person name="Imamura K."/>
            <person name="Itoh M."/>
            <person name="Kato T."/>
            <person name="Kawaji H."/>
            <person name="Kawagashira N."/>
            <person name="Kawashima T."/>
            <person name="Kojima M."/>
            <person name="Kondo S."/>
            <person name="Konno H."/>
            <person name="Nakano K."/>
            <person name="Ninomiya N."/>
            <person name="Nishio T."/>
            <person name="Okada M."/>
            <person name="Plessy C."/>
            <person name="Shibata K."/>
            <person name="Shiraki T."/>
            <person name="Suzuki S."/>
            <person name="Tagami M."/>
            <person name="Waki K."/>
            <person name="Watahiki A."/>
            <person name="Okamura-Oho Y."/>
            <person name="Suzuki H."/>
            <person name="Kawai J."/>
            <person name="Hayashizaki Y."/>
        </authorList>
    </citation>
    <scope>NUCLEOTIDE SEQUENCE [LARGE SCALE MRNA]</scope>
    <source>
        <strain>C57BL/6J</strain>
        <tissue>Kidney</tissue>
    </source>
</reference>
<reference key="2">
    <citation type="journal article" date="2004" name="Genome Res.">
        <title>The status, quality, and expansion of the NIH full-length cDNA project: the Mammalian Gene Collection (MGC).</title>
        <authorList>
            <consortium name="The MGC Project Team"/>
        </authorList>
    </citation>
    <scope>NUCLEOTIDE SEQUENCE [LARGE SCALE MRNA]</scope>
    <source>
        <strain>Czech II</strain>
        <tissue>Mammary tumor</tissue>
    </source>
</reference>
<reference key="3">
    <citation type="journal article" date="2018" name="Cell Discov.">
        <title>Gas41 links histone acetylation to H2A.Z deposition and maintenance of embryonic stem cell identity.</title>
        <authorList>
            <person name="Hsu C.C."/>
            <person name="Zhao D."/>
            <person name="Shi J."/>
            <person name="Peng D."/>
            <person name="Guan H."/>
            <person name="Li Y."/>
            <person name="Huang Y."/>
            <person name="Wen H."/>
            <person name="Li W."/>
            <person name="Li H."/>
            <person name="Shi X."/>
        </authorList>
    </citation>
    <scope>FUNCTION</scope>
</reference>